<protein>
    <recommendedName>
        <fullName evidence="1">L-carnitine CoA-transferase</fullName>
        <ecNumber evidence="1">2.8.3.21</ecNumber>
    </recommendedName>
    <alternativeName>
        <fullName evidence="1">Crotonobetainyl-CoA:carnitine CoA-transferase</fullName>
    </alternativeName>
</protein>
<comment type="function">
    <text evidence="1">Catalyzes the reversible transfer of the CoA moiety from gamma-butyrobetainyl-CoA to L-carnitine to generate L-carnitinyl-CoA and gamma-butyrobetaine. Is also able to catalyze the reversible transfer of the CoA moiety from gamma-butyrobetainyl-CoA or L-carnitinyl-CoA to crotonobetaine to generate crotonobetainyl-CoA.</text>
</comment>
<comment type="catalytic activity">
    <reaction evidence="1">
        <text>crotonobetainyl-CoA + (R)-carnitine = crotonobetaine + (R)-carnitinyl-CoA</text>
        <dbReference type="Rhea" id="RHEA:28526"/>
        <dbReference type="ChEBI" id="CHEBI:16347"/>
        <dbReference type="ChEBI" id="CHEBI:17237"/>
        <dbReference type="ChEBI" id="CHEBI:60932"/>
        <dbReference type="ChEBI" id="CHEBI:60933"/>
        <dbReference type="EC" id="2.8.3.21"/>
    </reaction>
</comment>
<comment type="catalytic activity">
    <reaction evidence="1">
        <text>4-(trimethylamino)butanoyl-CoA + (R)-carnitine = (R)-carnitinyl-CoA + 4-(trimethylamino)butanoate</text>
        <dbReference type="Rhea" id="RHEA:28418"/>
        <dbReference type="ChEBI" id="CHEBI:16244"/>
        <dbReference type="ChEBI" id="CHEBI:16347"/>
        <dbReference type="ChEBI" id="CHEBI:60932"/>
        <dbReference type="ChEBI" id="CHEBI:61513"/>
        <dbReference type="EC" id="2.8.3.21"/>
    </reaction>
</comment>
<comment type="pathway">
    <text evidence="1">Amine and polyamine metabolism; carnitine metabolism.</text>
</comment>
<comment type="subunit">
    <text evidence="1">Homodimer.</text>
</comment>
<comment type="subcellular location">
    <subcellularLocation>
        <location evidence="1">Cytoplasm</location>
    </subcellularLocation>
</comment>
<comment type="similarity">
    <text evidence="1">Belongs to the CoA-transferase III family. CaiB subfamily.</text>
</comment>
<sequence>MDHLPMPKFGPLAGLRVVFSGIEIAGPFAGQMFAEWGAEVIWIENVAWADTIRVQPNYPQLSRRNLHALSLNIFKDEGREAFLKLMETTDIFIEASKGPAFARRGITDEVLWQHNPKLVIAHLSGFGQYGTEEYTNLPAYNTIAQAFSGYLIQNGDVDQPMPAFPYTADYFSGLTATTAALAALHKVRETGKGESIDIAMYEVMLRMGQYFMMDYFNGGEMCPRMSKGKDPYYAGCGLYKCADGYIVMELVGITQIEECFKDIGLAHLLGTPEIPEGTQLIHRIECPYGPLVEEKLDAWLAAHTIAEVKERFAELNIACAKVLTVPELESNPQYVARESITQWQTMDGRTCKGPNIMPKFKNNPGQIWRGMPSHGMDTAAILKNIGYSENDIQELVSKGLAKVED</sequence>
<name>CAIB_SHIFL</name>
<dbReference type="EC" id="2.8.3.21" evidence="1"/>
<dbReference type="EMBL" id="AE005674">
    <property type="protein sequence ID" value="AAN41701.1"/>
    <property type="molecule type" value="Genomic_DNA"/>
</dbReference>
<dbReference type="EMBL" id="AE014073">
    <property type="protein sequence ID" value="AAP15582.1"/>
    <property type="molecule type" value="Genomic_DNA"/>
</dbReference>
<dbReference type="RefSeq" id="NP_705994.1">
    <property type="nucleotide sequence ID" value="NC_004337.2"/>
</dbReference>
<dbReference type="RefSeq" id="WP_000349932.1">
    <property type="nucleotide sequence ID" value="NZ_WPGW01000005.1"/>
</dbReference>
<dbReference type="SMR" id="P59394"/>
<dbReference type="STRING" id="198214.SF0035"/>
<dbReference type="PaxDb" id="198214-SF0035"/>
<dbReference type="GeneID" id="1024543"/>
<dbReference type="GeneID" id="75169937"/>
<dbReference type="KEGG" id="sfl:SF0035"/>
<dbReference type="KEGG" id="sfx:S0037"/>
<dbReference type="PATRIC" id="fig|198214.7.peg.41"/>
<dbReference type="HOGENOM" id="CLU_033975_2_0_6"/>
<dbReference type="UniPathway" id="UPA00117"/>
<dbReference type="Proteomes" id="UP000001006">
    <property type="component" value="Chromosome"/>
</dbReference>
<dbReference type="Proteomes" id="UP000002673">
    <property type="component" value="Chromosome"/>
</dbReference>
<dbReference type="GO" id="GO:0005737">
    <property type="term" value="C:cytoplasm"/>
    <property type="evidence" value="ECO:0007669"/>
    <property type="project" value="UniProtKB-SubCell"/>
</dbReference>
<dbReference type="GO" id="GO:0008735">
    <property type="term" value="F:L-carnitine CoA-transferase activity"/>
    <property type="evidence" value="ECO:0007669"/>
    <property type="project" value="RHEA"/>
</dbReference>
<dbReference type="GO" id="GO:0009437">
    <property type="term" value="P:carnitine metabolic process"/>
    <property type="evidence" value="ECO:0007669"/>
    <property type="project" value="UniProtKB-UniRule"/>
</dbReference>
<dbReference type="FunFam" id="3.30.1540.10:FF:000001">
    <property type="entry name" value="L-carnitine CoA-transferase"/>
    <property type="match status" value="1"/>
</dbReference>
<dbReference type="Gene3D" id="3.40.50.10540">
    <property type="entry name" value="Crotonobetainyl-coa:carnitine coa-transferase, domain 1"/>
    <property type="match status" value="1"/>
</dbReference>
<dbReference type="Gene3D" id="3.30.1540.10">
    <property type="entry name" value="formyl-coa transferase, domain 3"/>
    <property type="match status" value="1"/>
</dbReference>
<dbReference type="HAMAP" id="MF_01050">
    <property type="entry name" value="CaiB"/>
    <property type="match status" value="1"/>
</dbReference>
<dbReference type="InterPro" id="IPR050509">
    <property type="entry name" value="CoA-transferase_III"/>
</dbReference>
<dbReference type="InterPro" id="IPR023452">
    <property type="entry name" value="CoA-Trfase_CaiB"/>
</dbReference>
<dbReference type="InterPro" id="IPR003673">
    <property type="entry name" value="CoA-Trfase_fam_III"/>
</dbReference>
<dbReference type="InterPro" id="IPR044855">
    <property type="entry name" value="CoA-Trfase_III_dom3_sf"/>
</dbReference>
<dbReference type="InterPro" id="IPR023606">
    <property type="entry name" value="CoA-Trfase_III_dom_1_sf"/>
</dbReference>
<dbReference type="NCBIfam" id="NF002914">
    <property type="entry name" value="PRK03525.1"/>
    <property type="match status" value="1"/>
</dbReference>
<dbReference type="PANTHER" id="PTHR48228:SF6">
    <property type="entry name" value="L-CARNITINE COA-TRANSFERASE"/>
    <property type="match status" value="1"/>
</dbReference>
<dbReference type="PANTHER" id="PTHR48228">
    <property type="entry name" value="SUCCINYL-COA--D-CITRAMALATE COA-TRANSFERASE"/>
    <property type="match status" value="1"/>
</dbReference>
<dbReference type="Pfam" id="PF02515">
    <property type="entry name" value="CoA_transf_3"/>
    <property type="match status" value="1"/>
</dbReference>
<dbReference type="SUPFAM" id="SSF89796">
    <property type="entry name" value="CoA-transferase family III (CaiB/BaiF)"/>
    <property type="match status" value="1"/>
</dbReference>
<proteinExistence type="inferred from homology"/>
<accession>P59394</accession>
<reference key="1">
    <citation type="journal article" date="2002" name="Nucleic Acids Res.">
        <title>Genome sequence of Shigella flexneri 2a: insights into pathogenicity through comparison with genomes of Escherichia coli K12 and O157.</title>
        <authorList>
            <person name="Jin Q."/>
            <person name="Yuan Z."/>
            <person name="Xu J."/>
            <person name="Wang Y."/>
            <person name="Shen Y."/>
            <person name="Lu W."/>
            <person name="Wang J."/>
            <person name="Liu H."/>
            <person name="Yang J."/>
            <person name="Yang F."/>
            <person name="Zhang X."/>
            <person name="Zhang J."/>
            <person name="Yang G."/>
            <person name="Wu H."/>
            <person name="Qu D."/>
            <person name="Dong J."/>
            <person name="Sun L."/>
            <person name="Xue Y."/>
            <person name="Zhao A."/>
            <person name="Gao Y."/>
            <person name="Zhu J."/>
            <person name="Kan B."/>
            <person name="Ding K."/>
            <person name="Chen S."/>
            <person name="Cheng H."/>
            <person name="Yao Z."/>
            <person name="He B."/>
            <person name="Chen R."/>
            <person name="Ma D."/>
            <person name="Qiang B."/>
            <person name="Wen Y."/>
            <person name="Hou Y."/>
            <person name="Yu J."/>
        </authorList>
    </citation>
    <scope>NUCLEOTIDE SEQUENCE [LARGE SCALE GENOMIC DNA]</scope>
    <source>
        <strain>301 / Serotype 2a</strain>
    </source>
</reference>
<reference key="2">
    <citation type="journal article" date="2003" name="Infect. Immun.">
        <title>Complete genome sequence and comparative genomics of Shigella flexneri serotype 2a strain 2457T.</title>
        <authorList>
            <person name="Wei J."/>
            <person name="Goldberg M.B."/>
            <person name="Burland V."/>
            <person name="Venkatesan M.M."/>
            <person name="Deng W."/>
            <person name="Fournier G."/>
            <person name="Mayhew G.F."/>
            <person name="Plunkett G. III"/>
            <person name="Rose D.J."/>
            <person name="Darling A."/>
            <person name="Mau B."/>
            <person name="Perna N.T."/>
            <person name="Payne S.M."/>
            <person name="Runyen-Janecky L.J."/>
            <person name="Zhou S."/>
            <person name="Schwartz D.C."/>
            <person name="Blattner F.R."/>
        </authorList>
    </citation>
    <scope>NUCLEOTIDE SEQUENCE [LARGE SCALE GENOMIC DNA]</scope>
    <source>
        <strain>ATCC 700930 / 2457T / Serotype 2a</strain>
    </source>
</reference>
<keyword id="KW-0963">Cytoplasm</keyword>
<keyword id="KW-1185">Reference proteome</keyword>
<keyword id="KW-0808">Transferase</keyword>
<evidence type="ECO:0000255" key="1">
    <source>
        <dbReference type="HAMAP-Rule" id="MF_01050"/>
    </source>
</evidence>
<feature type="chain" id="PRO_0000194714" description="L-carnitine CoA-transferase">
    <location>
        <begin position="1"/>
        <end position="405"/>
    </location>
</feature>
<feature type="active site" description="Nucleophile" evidence="1">
    <location>
        <position position="169"/>
    </location>
</feature>
<feature type="binding site" evidence="1">
    <location>
        <position position="97"/>
    </location>
    <ligand>
        <name>CoA</name>
        <dbReference type="ChEBI" id="CHEBI:57287"/>
    </ligand>
</feature>
<feature type="binding site" evidence="1">
    <location>
        <position position="104"/>
    </location>
    <ligand>
        <name>CoA</name>
        <dbReference type="ChEBI" id="CHEBI:57287"/>
    </ligand>
</feature>
<gene>
    <name evidence="1" type="primary">caiB</name>
    <name type="ordered locus">SF0035</name>
    <name type="ordered locus">S0037</name>
</gene>
<organism>
    <name type="scientific">Shigella flexneri</name>
    <dbReference type="NCBI Taxonomy" id="623"/>
    <lineage>
        <taxon>Bacteria</taxon>
        <taxon>Pseudomonadati</taxon>
        <taxon>Pseudomonadota</taxon>
        <taxon>Gammaproteobacteria</taxon>
        <taxon>Enterobacterales</taxon>
        <taxon>Enterobacteriaceae</taxon>
        <taxon>Shigella</taxon>
    </lineage>
</organism>